<reference key="1">
    <citation type="journal article" date="1995" name="Science">
        <title>Whole-genome random sequencing and assembly of Haemophilus influenzae Rd.</title>
        <authorList>
            <person name="Fleischmann R.D."/>
            <person name="Adams M.D."/>
            <person name="White O."/>
            <person name="Clayton R.A."/>
            <person name="Kirkness E.F."/>
            <person name="Kerlavage A.R."/>
            <person name="Bult C.J."/>
            <person name="Tomb J.-F."/>
            <person name="Dougherty B.A."/>
            <person name="Merrick J.M."/>
            <person name="McKenney K."/>
            <person name="Sutton G.G."/>
            <person name="FitzHugh W."/>
            <person name="Fields C.A."/>
            <person name="Gocayne J.D."/>
            <person name="Scott J.D."/>
            <person name="Shirley R."/>
            <person name="Liu L.-I."/>
            <person name="Glodek A."/>
            <person name="Kelley J.M."/>
            <person name="Weidman J.F."/>
            <person name="Phillips C.A."/>
            <person name="Spriggs T."/>
            <person name="Hedblom E."/>
            <person name="Cotton M.D."/>
            <person name="Utterback T.R."/>
            <person name="Hanna M.C."/>
            <person name="Nguyen D.T."/>
            <person name="Saudek D.M."/>
            <person name="Brandon R.C."/>
            <person name="Fine L.D."/>
            <person name="Fritchman J.L."/>
            <person name="Fuhrmann J.L."/>
            <person name="Geoghagen N.S.M."/>
            <person name="Gnehm C.L."/>
            <person name="McDonald L.A."/>
            <person name="Small K.V."/>
            <person name="Fraser C.M."/>
            <person name="Smith H.O."/>
            <person name="Venter J.C."/>
        </authorList>
    </citation>
    <scope>NUCLEOTIDE SEQUENCE [LARGE SCALE GENOMIC DNA]</scope>
    <source>
        <strain>ATCC 51907 / DSM 11121 / KW20 / Rd</strain>
    </source>
</reference>
<sequence length="227" mass="25727">MSKLLLVDDDIELTELLSTLLELEGFDVETANNGLEALQKLNESYKLVLLDVMMPKLNGIETLKEIRKVSNVPVMMLTARGEDIDRVLGLELGADDCLPKPFNDRELIARIKAILRRSASPSNNISNVEILSFDGITLHFSHGIATYNEENLNLTDYEFKILCLLLKSKGNVVSREELSLEVMEKPLTPFDRSLDMHISNLRRKLPKRKNKPSWFKTLRGKGYALVT</sequence>
<proteinExistence type="inferred from homology"/>
<gene>
    <name type="primary">cpxR</name>
    <name type="ordered locus">HI_0837</name>
</gene>
<accession>P44895</accession>
<organism>
    <name type="scientific">Haemophilus influenzae (strain ATCC 51907 / DSM 11121 / KW20 / Rd)</name>
    <dbReference type="NCBI Taxonomy" id="71421"/>
    <lineage>
        <taxon>Bacteria</taxon>
        <taxon>Pseudomonadati</taxon>
        <taxon>Pseudomonadota</taxon>
        <taxon>Gammaproteobacteria</taxon>
        <taxon>Pasteurellales</taxon>
        <taxon>Pasteurellaceae</taxon>
        <taxon>Haemophilus</taxon>
    </lineage>
</organism>
<protein>
    <recommendedName>
        <fullName>Transcriptional regulatory protein CpxR homolog</fullName>
    </recommendedName>
</protein>
<keyword id="KW-0963">Cytoplasm</keyword>
<keyword id="KW-0238">DNA-binding</keyword>
<keyword id="KW-0597">Phosphoprotein</keyword>
<keyword id="KW-1185">Reference proteome</keyword>
<keyword id="KW-0804">Transcription</keyword>
<keyword id="KW-0805">Transcription regulation</keyword>
<keyword id="KW-0902">Two-component regulatory system</keyword>
<comment type="function">
    <text evidence="1">Member of a two-component regulatory system.</text>
</comment>
<comment type="subcellular location">
    <subcellularLocation>
        <location evidence="4">Cytoplasm</location>
    </subcellularLocation>
</comment>
<comment type="PTM">
    <text evidence="4">Phosphorylated.</text>
</comment>
<name>CPXR_HAEIN</name>
<feature type="chain" id="PRO_0000081081" description="Transcriptional regulatory protein CpxR homolog">
    <location>
        <begin position="1"/>
        <end position="227"/>
    </location>
</feature>
<feature type="domain" description="Response regulatory" evidence="2">
    <location>
        <begin position="3"/>
        <end position="115"/>
    </location>
</feature>
<feature type="DNA-binding region" description="OmpR/PhoB-type" evidence="3">
    <location>
        <begin position="128"/>
        <end position="227"/>
    </location>
</feature>
<feature type="modified residue" description="4-aspartylphosphate" evidence="2">
    <location>
        <position position="51"/>
    </location>
</feature>
<evidence type="ECO:0000250" key="1"/>
<evidence type="ECO:0000255" key="2">
    <source>
        <dbReference type="PROSITE-ProRule" id="PRU00169"/>
    </source>
</evidence>
<evidence type="ECO:0000255" key="3">
    <source>
        <dbReference type="PROSITE-ProRule" id="PRU01091"/>
    </source>
</evidence>
<evidence type="ECO:0000305" key="4"/>
<dbReference type="EMBL" id="L42023">
    <property type="protein sequence ID" value="AAC22495.1"/>
    <property type="molecule type" value="Genomic_DNA"/>
</dbReference>
<dbReference type="PIR" id="C64159">
    <property type="entry name" value="C64159"/>
</dbReference>
<dbReference type="RefSeq" id="NP_438997.1">
    <property type="nucleotide sequence ID" value="NC_000907.1"/>
</dbReference>
<dbReference type="SMR" id="P44895"/>
<dbReference type="STRING" id="71421.HI_0837"/>
<dbReference type="EnsemblBacteria" id="AAC22495">
    <property type="protein sequence ID" value="AAC22495"/>
    <property type="gene ID" value="HI_0837"/>
</dbReference>
<dbReference type="KEGG" id="hin:HI_0837"/>
<dbReference type="PATRIC" id="fig|71421.8.peg.878"/>
<dbReference type="eggNOG" id="COG0745">
    <property type="taxonomic scope" value="Bacteria"/>
</dbReference>
<dbReference type="HOGENOM" id="CLU_000445_30_4_6"/>
<dbReference type="OrthoDB" id="9802426at2"/>
<dbReference type="PhylomeDB" id="P44895"/>
<dbReference type="BioCyc" id="HINF71421:G1GJ1-878-MONOMER"/>
<dbReference type="Proteomes" id="UP000000579">
    <property type="component" value="Chromosome"/>
</dbReference>
<dbReference type="GO" id="GO:0005829">
    <property type="term" value="C:cytosol"/>
    <property type="evidence" value="ECO:0000318"/>
    <property type="project" value="GO_Central"/>
</dbReference>
<dbReference type="GO" id="GO:0032993">
    <property type="term" value="C:protein-DNA complex"/>
    <property type="evidence" value="ECO:0000318"/>
    <property type="project" value="GO_Central"/>
</dbReference>
<dbReference type="GO" id="GO:0000156">
    <property type="term" value="F:phosphorelay response regulator activity"/>
    <property type="evidence" value="ECO:0000318"/>
    <property type="project" value="GO_Central"/>
</dbReference>
<dbReference type="GO" id="GO:0000976">
    <property type="term" value="F:transcription cis-regulatory region binding"/>
    <property type="evidence" value="ECO:0000318"/>
    <property type="project" value="GO_Central"/>
</dbReference>
<dbReference type="GO" id="GO:0006355">
    <property type="term" value="P:regulation of DNA-templated transcription"/>
    <property type="evidence" value="ECO:0000318"/>
    <property type="project" value="GO_Central"/>
</dbReference>
<dbReference type="CDD" id="cd17623">
    <property type="entry name" value="REC_OmpR_CpxR"/>
    <property type="match status" value="1"/>
</dbReference>
<dbReference type="CDD" id="cd00383">
    <property type="entry name" value="trans_reg_C"/>
    <property type="match status" value="1"/>
</dbReference>
<dbReference type="FunFam" id="3.40.50.2300:FF:000001">
    <property type="entry name" value="DNA-binding response regulator PhoB"/>
    <property type="match status" value="1"/>
</dbReference>
<dbReference type="Gene3D" id="3.40.50.2300">
    <property type="match status" value="1"/>
</dbReference>
<dbReference type="Gene3D" id="6.10.250.690">
    <property type="match status" value="1"/>
</dbReference>
<dbReference type="Gene3D" id="1.10.10.10">
    <property type="entry name" value="Winged helix-like DNA-binding domain superfamily/Winged helix DNA-binding domain"/>
    <property type="match status" value="1"/>
</dbReference>
<dbReference type="InterPro" id="IPR011006">
    <property type="entry name" value="CheY-like_superfamily"/>
</dbReference>
<dbReference type="InterPro" id="IPR001867">
    <property type="entry name" value="OmpR/PhoB-type_DNA-bd"/>
</dbReference>
<dbReference type="InterPro" id="IPR016032">
    <property type="entry name" value="Sig_transdc_resp-reg_C-effctor"/>
</dbReference>
<dbReference type="InterPro" id="IPR001789">
    <property type="entry name" value="Sig_transdc_resp-reg_receiver"/>
</dbReference>
<dbReference type="InterPro" id="IPR039420">
    <property type="entry name" value="WalR-like"/>
</dbReference>
<dbReference type="InterPro" id="IPR036388">
    <property type="entry name" value="WH-like_DNA-bd_sf"/>
</dbReference>
<dbReference type="PANTHER" id="PTHR48111">
    <property type="entry name" value="REGULATOR OF RPOS"/>
    <property type="match status" value="1"/>
</dbReference>
<dbReference type="PANTHER" id="PTHR48111:SF39">
    <property type="entry name" value="TRANSCRIPTIONAL REGULATORY PROTEIN CPXR"/>
    <property type="match status" value="1"/>
</dbReference>
<dbReference type="Pfam" id="PF00072">
    <property type="entry name" value="Response_reg"/>
    <property type="match status" value="1"/>
</dbReference>
<dbReference type="Pfam" id="PF00486">
    <property type="entry name" value="Trans_reg_C"/>
    <property type="match status" value="1"/>
</dbReference>
<dbReference type="SMART" id="SM00448">
    <property type="entry name" value="REC"/>
    <property type="match status" value="1"/>
</dbReference>
<dbReference type="SMART" id="SM00862">
    <property type="entry name" value="Trans_reg_C"/>
    <property type="match status" value="1"/>
</dbReference>
<dbReference type="SUPFAM" id="SSF46894">
    <property type="entry name" value="C-terminal effector domain of the bipartite response regulators"/>
    <property type="match status" value="1"/>
</dbReference>
<dbReference type="SUPFAM" id="SSF52172">
    <property type="entry name" value="CheY-like"/>
    <property type="match status" value="1"/>
</dbReference>
<dbReference type="PROSITE" id="PS51755">
    <property type="entry name" value="OMPR_PHOB"/>
    <property type="match status" value="1"/>
</dbReference>
<dbReference type="PROSITE" id="PS50110">
    <property type="entry name" value="RESPONSE_REGULATORY"/>
    <property type="match status" value="1"/>
</dbReference>